<comment type="function">
    <text>This protein allows the phage to reside inactively in the chromosome of its host bacterium. This lysogenic state is maintained by binding of regulatory protein C2 to the OR and OL operators, preventing transcription of proteins necessary for lytic development.</text>
</comment>
<comment type="PTM">
    <text>In the mature form of the repressor protein the initiator methionine is deformylated.</text>
</comment>
<protein>
    <recommendedName>
        <fullName>Repressor protein C2</fullName>
    </recommendedName>
</protein>
<accession>P69202</accession>
<accession>P03035</accession>
<accession>Q7PCF2</accession>
<reference key="1">
    <citation type="journal article" date="1981" name="Biochemistry">
        <title>Primary structure of the phage P22 repressor and its gene c2.</title>
        <authorList>
            <person name="Sauer R.T."/>
            <person name="Pan J."/>
            <person name="Hopper P."/>
            <person name="Hehir K."/>
            <person name="Brown J."/>
            <person name="Poteete A.R."/>
        </authorList>
    </citation>
    <scope>NUCLEOTIDE SEQUENCE [GENOMIC DNA]</scope>
    <scope>PROTEIN SEQUENCE</scope>
</reference>
<reference key="2">
    <citation type="journal article" date="2000" name="J. Bacteriol.">
        <title>Sequence of the genome of Salmonella bacteriophage P22.</title>
        <authorList>
            <person name="Vander Byl C.S."/>
            <person name="Kropinski A.M.B."/>
        </authorList>
    </citation>
    <scope>NUCLEOTIDE SEQUENCE [LARGE SCALE GENOMIC DNA]</scope>
</reference>
<reference key="3">
    <citation type="journal article" date="2003" name="J. Bacteriol.">
        <title>Corrected sequence of the bacteriophage P22 genome.</title>
        <authorList>
            <person name="Pedulla M.L."/>
            <person name="Ford M.E."/>
            <person name="Karthikeyan T."/>
            <person name="Houtz J.M."/>
            <person name="Hendrix R.W."/>
            <person name="Hatfull G.F."/>
            <person name="Poteete A.R."/>
            <person name="Gilcrease E.B."/>
            <person name="Winn-Stapley D.A."/>
            <person name="Casjens S.R."/>
        </authorList>
    </citation>
    <scope>NUCLEOTIDE SEQUENCE [LARGE SCALE GENOMIC DNA]</scope>
</reference>
<reference key="4">
    <citation type="journal article" date="1980" name="J. Mol. Biol.">
        <title>Operator sequences of bacteriophages P22 and 21.</title>
        <authorList>
            <person name="Poteete A.R."/>
            <person name="Ptashne M."/>
            <person name="Ballivet M."/>
            <person name="Eisen H."/>
        </authorList>
    </citation>
    <scope>NUCLEOTIDE SEQUENCE [GENOMIC DNA] OF 1-5</scope>
</reference>
<reference key="5">
    <citation type="journal article" date="1994" name="J. Mol. Biol.">
        <title>Determination of the nuclear magnetic resonance structure of the DNA-binding domain of the P22 c2 repressor (1 to 76) in solution and comparison with the DNA-binding domain of the 434 repressor.</title>
        <authorList>
            <person name="Sevilla-Sierra P."/>
            <person name="Otting G."/>
            <person name="Wuethrich K."/>
        </authorList>
    </citation>
    <scope>STRUCTURE BY NMR OF 1-76</scope>
</reference>
<proteinExistence type="evidence at protein level"/>
<sequence>MNTQLMGERIRARRKKLKIRQAALGKMVGVSNVAISQWERSETEPNGENLLALSKALQCSPDYLLKGDLSQTNVAYHSRHEPRGSYPLISWVSAGQWMEAVEPYHKRAIENWHDTTVDCSEDSFWLDVQGDSMTAPAGLSIPEGMIILVDPEVEPRNGKLVVAKLEGENEATFKKLVMDAGRKFLKPLNPQYPMIEINGNCKIIGVVVDAKLANLP</sequence>
<organismHost>
    <name type="scientific">Salmonella typhimurium</name>
    <dbReference type="NCBI Taxonomy" id="90371"/>
</organismHost>
<name>RPC2_BPP22</name>
<organism>
    <name type="scientific">Salmonella phage P22</name>
    <name type="common">Bacteriophage P22</name>
    <dbReference type="NCBI Taxonomy" id="10754"/>
    <lineage>
        <taxon>Viruses</taxon>
        <taxon>Duplodnaviria</taxon>
        <taxon>Heunggongvirae</taxon>
        <taxon>Uroviricota</taxon>
        <taxon>Caudoviricetes</taxon>
        <taxon>Lederbergvirus</taxon>
    </lineage>
</organism>
<evidence type="ECO:0000255" key="1">
    <source>
        <dbReference type="PROSITE-ProRule" id="PRU00257"/>
    </source>
</evidence>
<evidence type="ECO:0007829" key="2">
    <source>
        <dbReference type="PDB" id="1ADR"/>
    </source>
</evidence>
<evidence type="ECO:0007829" key="3">
    <source>
        <dbReference type="PDB" id="2R1J"/>
    </source>
</evidence>
<keyword id="KW-0002">3D-structure</keyword>
<keyword id="KW-0903">Direct protein sequencing</keyword>
<keyword id="KW-0238">DNA-binding</keyword>
<keyword id="KW-1185">Reference proteome</keyword>
<keyword id="KW-0678">Repressor</keyword>
<keyword id="KW-0804">Transcription</keyword>
<keyword id="KW-0805">Transcription regulation</keyword>
<feature type="chain" id="PRO_0000149717" description="Repressor protein C2">
    <location>
        <begin position="1"/>
        <end position="216"/>
    </location>
</feature>
<feature type="domain" description="HTH cro/C1-type" evidence="1">
    <location>
        <begin position="10"/>
        <end position="64"/>
    </location>
</feature>
<feature type="DNA-binding region" description="H-T-H motif" evidence="1">
    <location>
        <begin position="21"/>
        <end position="40"/>
    </location>
</feature>
<feature type="site" description="Not N-formylated">
    <location>
        <position position="1"/>
    </location>
</feature>
<feature type="helix" evidence="3">
    <location>
        <begin position="6"/>
        <end position="17"/>
    </location>
</feature>
<feature type="helix" evidence="3">
    <location>
        <begin position="21"/>
        <end position="28"/>
    </location>
</feature>
<feature type="helix" evidence="3">
    <location>
        <begin position="32"/>
        <end position="39"/>
    </location>
</feature>
<feature type="helix" evidence="3">
    <location>
        <begin position="47"/>
        <end position="56"/>
    </location>
</feature>
<feature type="helix" evidence="3">
    <location>
        <begin position="61"/>
        <end position="66"/>
    </location>
</feature>
<feature type="turn" evidence="2">
    <location>
        <begin position="73"/>
        <end position="75"/>
    </location>
</feature>
<gene>
    <name type="primary">C2</name>
</gene>
<dbReference type="EMBL" id="V01153">
    <property type="protein sequence ID" value="CAA24470.1"/>
    <property type="molecule type" value="Genomic_DNA"/>
</dbReference>
<dbReference type="EMBL" id="AF217253">
    <property type="protein sequence ID" value="AAF75024.1"/>
    <property type="molecule type" value="Genomic_DNA"/>
</dbReference>
<dbReference type="EMBL" id="BK000583">
    <property type="protein sequence ID" value="DAA01021.1"/>
    <property type="molecule type" value="Genomic_DNA"/>
</dbReference>
<dbReference type="PIR" id="A03571">
    <property type="entry name" value="RPBP22"/>
</dbReference>
<dbReference type="RefSeq" id="NP_059606.1">
    <property type="nucleotide sequence ID" value="NC_002371.2"/>
</dbReference>
<dbReference type="PDB" id="1ADR">
    <property type="method" value="NMR"/>
    <property type="chains" value="A=1-76"/>
</dbReference>
<dbReference type="PDB" id="2R1J">
    <property type="method" value="X-ray"/>
    <property type="resolution" value="1.53 A"/>
    <property type="chains" value="L/R=1-68"/>
</dbReference>
<dbReference type="PDB" id="3JXB">
    <property type="method" value="X-ray"/>
    <property type="resolution" value="1.67 A"/>
    <property type="chains" value="C/D=2-68"/>
</dbReference>
<dbReference type="PDB" id="3JXC">
    <property type="method" value="X-ray"/>
    <property type="resolution" value="1.90 A"/>
    <property type="chains" value="L/R=2-68"/>
</dbReference>
<dbReference type="PDB" id="3JXD">
    <property type="method" value="X-ray"/>
    <property type="resolution" value="2.10 A"/>
    <property type="chains" value="L/R=2-68"/>
</dbReference>
<dbReference type="PDBsum" id="1ADR"/>
<dbReference type="PDBsum" id="2R1J"/>
<dbReference type="PDBsum" id="3JXB"/>
<dbReference type="PDBsum" id="3JXC"/>
<dbReference type="PDBsum" id="3JXD"/>
<dbReference type="SMR" id="P69202"/>
<dbReference type="MEROPS" id="S24.002"/>
<dbReference type="GeneID" id="1262793"/>
<dbReference type="KEGG" id="vg:1262793"/>
<dbReference type="OrthoDB" id="6912at10239"/>
<dbReference type="EvolutionaryTrace" id="P69202"/>
<dbReference type="Proteomes" id="UP000001795">
    <property type="component" value="Segment"/>
</dbReference>
<dbReference type="Proteomes" id="UP000007960">
    <property type="component" value="Segment"/>
</dbReference>
<dbReference type="GO" id="GO:0003677">
    <property type="term" value="F:DNA binding"/>
    <property type="evidence" value="ECO:0007669"/>
    <property type="project" value="UniProtKB-KW"/>
</dbReference>
<dbReference type="CDD" id="cd00093">
    <property type="entry name" value="HTH_XRE"/>
    <property type="match status" value="1"/>
</dbReference>
<dbReference type="CDD" id="cd06529">
    <property type="entry name" value="S24_LexA-like"/>
    <property type="match status" value="1"/>
</dbReference>
<dbReference type="Gene3D" id="1.10.260.40">
    <property type="entry name" value="lambda repressor-like DNA-binding domains"/>
    <property type="match status" value="1"/>
</dbReference>
<dbReference type="Gene3D" id="2.10.109.10">
    <property type="entry name" value="Umud Fragment, subunit A"/>
    <property type="match status" value="1"/>
</dbReference>
<dbReference type="InterPro" id="IPR001387">
    <property type="entry name" value="Cro/C1-type_HTH"/>
</dbReference>
<dbReference type="InterPro" id="IPR010982">
    <property type="entry name" value="Lambda_DNA-bd_dom_sf"/>
</dbReference>
<dbReference type="InterPro" id="IPR039418">
    <property type="entry name" value="LexA-like"/>
</dbReference>
<dbReference type="InterPro" id="IPR036286">
    <property type="entry name" value="LexA/Signal_pep-like_sf"/>
</dbReference>
<dbReference type="InterPro" id="IPR050077">
    <property type="entry name" value="LexA_repressor"/>
</dbReference>
<dbReference type="InterPro" id="IPR015927">
    <property type="entry name" value="Peptidase_S24_S26A/B/C"/>
</dbReference>
<dbReference type="PANTHER" id="PTHR33516">
    <property type="entry name" value="LEXA REPRESSOR"/>
    <property type="match status" value="1"/>
</dbReference>
<dbReference type="PANTHER" id="PTHR33516:SF2">
    <property type="entry name" value="LEXA REPRESSOR-RELATED"/>
    <property type="match status" value="1"/>
</dbReference>
<dbReference type="Pfam" id="PF01381">
    <property type="entry name" value="HTH_3"/>
    <property type="match status" value="1"/>
</dbReference>
<dbReference type="Pfam" id="PF00717">
    <property type="entry name" value="Peptidase_S24"/>
    <property type="match status" value="1"/>
</dbReference>
<dbReference type="SMART" id="SM00530">
    <property type="entry name" value="HTH_XRE"/>
    <property type="match status" value="1"/>
</dbReference>
<dbReference type="SUPFAM" id="SSF47413">
    <property type="entry name" value="lambda repressor-like DNA-binding domains"/>
    <property type="match status" value="1"/>
</dbReference>
<dbReference type="SUPFAM" id="SSF51306">
    <property type="entry name" value="LexA/Signal peptidase"/>
    <property type="match status" value="1"/>
</dbReference>
<dbReference type="PROSITE" id="PS50943">
    <property type="entry name" value="HTH_CROC1"/>
    <property type="match status" value="1"/>
</dbReference>